<feature type="chain" id="PRO_0000086231" description="Kinase suppressor of Ras 2">
    <location>
        <begin position="1"/>
        <end position="950"/>
    </location>
</feature>
<feature type="domain" description="Protein kinase" evidence="3">
    <location>
        <begin position="666"/>
        <end position="931"/>
    </location>
</feature>
<feature type="zinc finger region" description="Phorbol-ester/DAG-type" evidence="4">
    <location>
        <begin position="412"/>
        <end position="456"/>
    </location>
</feature>
<feature type="region of interest" description="Disordered" evidence="5">
    <location>
        <begin position="239"/>
        <end position="296"/>
    </location>
</feature>
<feature type="region of interest" description="Disordered" evidence="5">
    <location>
        <begin position="498"/>
        <end position="556"/>
    </location>
</feature>
<feature type="compositionally biased region" description="Low complexity" evidence="5">
    <location>
        <begin position="259"/>
        <end position="273"/>
    </location>
</feature>
<feature type="compositionally biased region" description="Low complexity" evidence="5">
    <location>
        <begin position="517"/>
        <end position="530"/>
    </location>
</feature>
<feature type="compositionally biased region" description="Pro residues" evidence="5">
    <location>
        <begin position="531"/>
        <end position="548"/>
    </location>
</feature>
<feature type="active site" description="Proton donor/acceptor" evidence="13">
    <location>
        <position position="786"/>
    </location>
</feature>
<feature type="binding site" evidence="1">
    <location>
        <position position="413"/>
    </location>
    <ligand>
        <name>Zn(2+)</name>
        <dbReference type="ChEBI" id="CHEBI:29105"/>
        <label>1</label>
    </ligand>
</feature>
<feature type="binding site" evidence="1">
    <location>
        <position position="425"/>
    </location>
    <ligand>
        <name>Zn(2+)</name>
        <dbReference type="ChEBI" id="CHEBI:29105"/>
        <label>2</label>
    </ligand>
</feature>
<feature type="binding site" evidence="1">
    <location>
        <position position="428"/>
    </location>
    <ligand>
        <name>Zn(2+)</name>
        <dbReference type="ChEBI" id="CHEBI:29105"/>
        <label>2</label>
    </ligand>
</feature>
<feature type="binding site" evidence="1">
    <location>
        <position position="438"/>
    </location>
    <ligand>
        <name>Zn(2+)</name>
        <dbReference type="ChEBI" id="CHEBI:29105"/>
        <label>1</label>
    </ligand>
</feature>
<feature type="binding site" evidence="1">
    <location>
        <position position="441"/>
    </location>
    <ligand>
        <name>Zn(2+)</name>
        <dbReference type="ChEBI" id="CHEBI:29105"/>
        <label>1</label>
    </ligand>
</feature>
<feature type="binding site" evidence="1">
    <location>
        <position position="446"/>
    </location>
    <ligand>
        <name>Zn(2+)</name>
        <dbReference type="ChEBI" id="CHEBI:29105"/>
        <label>2</label>
    </ligand>
</feature>
<feature type="binding site" evidence="1">
    <location>
        <position position="449"/>
    </location>
    <ligand>
        <name>Zn(2+)</name>
        <dbReference type="ChEBI" id="CHEBI:29105"/>
        <label>2</label>
    </ligand>
</feature>
<feature type="binding site" evidence="1">
    <location>
        <position position="456"/>
    </location>
    <ligand>
        <name>Zn(2+)</name>
        <dbReference type="ChEBI" id="CHEBI:29105"/>
        <label>1</label>
    </ligand>
</feature>
<feature type="binding site" evidence="3 9">
    <location>
        <begin position="672"/>
        <end position="680"/>
    </location>
    <ligand>
        <name>ATP</name>
        <dbReference type="ChEBI" id="CHEBI:30616"/>
    </ligand>
</feature>
<feature type="binding site" evidence="13">
    <location>
        <position position="788"/>
    </location>
    <ligand>
        <name>ATP</name>
        <dbReference type="ChEBI" id="CHEBI:30616"/>
    </ligand>
</feature>
<feature type="binding site" evidence="13">
    <location>
        <position position="803"/>
    </location>
    <ligand>
        <name>ATP</name>
        <dbReference type="ChEBI" id="CHEBI:30616"/>
    </ligand>
</feature>
<feature type="modified residue" description="Phosphothreonine" evidence="2">
    <location>
        <position position="272"/>
    </location>
</feature>
<feature type="modified residue" description="Phosphothreonine" evidence="2">
    <location>
        <position position="276"/>
    </location>
</feature>
<feature type="modified residue" description="Phosphoserine; by MARK3" evidence="1">
    <location>
        <position position="474"/>
    </location>
</feature>
<feature type="modified residue" description="Phosphothreonine" evidence="2">
    <location>
        <position position="497"/>
    </location>
</feature>
<feature type="splice variant" id="VSP_012234" description="In isoform 2." evidence="11">
    <location>
        <begin position="1"/>
        <end position="303"/>
    </location>
</feature>
<feature type="splice variant" id="VSP_012235" description="In isoform 2." evidence="11">
    <original>GFTALHRSKSHEFQLGHRVDEAHTPK</original>
    <variation>MYNKKAKMEPNASESAIPARRQRQPR</variation>
    <location>
        <begin position="304"/>
        <end position="329"/>
    </location>
</feature>
<feature type="splice variant" id="VSP_012236" description="In isoform 2." evidence="11">
    <original>SLC</original>
    <variation>RPV</variation>
    <location>
        <begin position="740"/>
        <end position="742"/>
    </location>
</feature>
<feature type="splice variant" id="VSP_012237" description="In isoform 2." evidence="11">
    <location>
        <begin position="743"/>
        <end position="950"/>
    </location>
</feature>
<feature type="sequence variant" id="VAR_040659" description="In a lung adenocarcinoma sample; somatic mutation." evidence="8">
    <original>R</original>
    <variation>S</variation>
    <location>
        <position position="676"/>
    </location>
</feature>
<feature type="mutagenesis site" description="Impairs formation of heterotetramers with MAP2K1, but not the formation of heterodimers." evidence="9">
    <original>R</original>
    <variation>H</variation>
    <location>
        <position position="718"/>
    </location>
</feature>
<feature type="mutagenesis site" description="Loss of kinase activity." evidence="9">
    <original>D</original>
    <variation>A</variation>
    <location>
        <position position="786"/>
    </location>
</feature>
<feature type="mutagenesis site" description="Impairs MAP2K1 binding." evidence="9">
    <original>A</original>
    <variation>L</variation>
    <location>
        <position position="879"/>
    </location>
</feature>
<feature type="helix" evidence="16">
    <location>
        <begin position="656"/>
        <end position="658"/>
    </location>
</feature>
<feature type="strand" evidence="16">
    <location>
        <begin position="659"/>
        <end position="661"/>
    </location>
</feature>
<feature type="strand" evidence="16">
    <location>
        <begin position="667"/>
        <end position="673"/>
    </location>
</feature>
<feature type="strand" evidence="16">
    <location>
        <begin position="676"/>
        <end position="684"/>
    </location>
</feature>
<feature type="strand" evidence="16">
    <location>
        <begin position="688"/>
        <end position="695"/>
    </location>
</feature>
<feature type="strand" evidence="15">
    <location>
        <begin position="698"/>
        <end position="700"/>
    </location>
</feature>
<feature type="helix" evidence="16">
    <location>
        <begin position="701"/>
        <end position="714"/>
    </location>
</feature>
<feature type="strand" evidence="16">
    <location>
        <begin position="725"/>
        <end position="727"/>
    </location>
</feature>
<feature type="strand" evidence="16">
    <location>
        <begin position="734"/>
        <end position="740"/>
    </location>
</feature>
<feature type="strand" evidence="16">
    <location>
        <begin position="744"/>
        <end position="746"/>
    </location>
</feature>
<feature type="helix" evidence="16">
    <location>
        <begin position="747"/>
        <end position="751"/>
    </location>
</feature>
<feature type="helix" evidence="16">
    <location>
        <begin position="760"/>
        <end position="779"/>
    </location>
</feature>
<feature type="helix" evidence="16">
    <location>
        <begin position="789"/>
        <end position="791"/>
    </location>
</feature>
<feature type="strand" evidence="16">
    <location>
        <begin position="792"/>
        <end position="795"/>
    </location>
</feature>
<feature type="strand" evidence="16">
    <location>
        <begin position="798"/>
        <end position="801"/>
    </location>
</feature>
<feature type="helix" evidence="16">
    <location>
        <begin position="806"/>
        <end position="809"/>
    </location>
</feature>
<feature type="strand" evidence="16">
    <location>
        <begin position="821"/>
        <end position="825"/>
    </location>
</feature>
<feature type="turn" evidence="16">
    <location>
        <begin position="826"/>
        <end position="828"/>
    </location>
</feature>
<feature type="helix" evidence="16">
    <location>
        <begin position="829"/>
        <end position="831"/>
    </location>
</feature>
<feature type="helix" evidence="16">
    <location>
        <begin position="834"/>
        <end position="837"/>
    </location>
</feature>
<feature type="helix" evidence="16">
    <location>
        <begin position="846"/>
        <end position="848"/>
    </location>
</feature>
<feature type="helix" evidence="16">
    <location>
        <begin position="853"/>
        <end position="869"/>
    </location>
</feature>
<feature type="turn" evidence="16">
    <location>
        <begin position="873"/>
        <end position="876"/>
    </location>
</feature>
<feature type="helix" evidence="16">
    <location>
        <begin position="879"/>
        <end position="887"/>
    </location>
</feature>
<feature type="helix" evidence="16">
    <location>
        <begin position="895"/>
        <end position="897"/>
    </location>
</feature>
<feature type="helix" evidence="16">
    <location>
        <begin position="901"/>
        <end position="910"/>
    </location>
</feature>
<feature type="helix" evidence="16">
    <location>
        <begin position="915"/>
        <end position="917"/>
    </location>
</feature>
<feature type="helix" evidence="16">
    <location>
        <begin position="921"/>
        <end position="929"/>
    </location>
</feature>
<comment type="function">
    <text evidence="6 7 9 10">Location-regulated scaffold connecting MEK to RAF. Has very low protein kinase activity and can phosphorylate MAP2K1 at several Ser and Thr residues with very low efficiency (in vitro). Acts as MAP2K1/MEK1-dependent allosteric activator of BRAF; upon binding to MAP2K1/MEK1, dimerizes with BRAF and promotes BRAF-mediated phosphorylation of MAP2K1/MEK1 (PubMed:29433126). Interaction with BRAF enhances KSR2-mediated phosphorylation of MAP2K1 (in vitro). Blocks MAP3K8 kinase activity and MAP3K8-mediated signaling. Acts as a negative regulator of MAP3K3-mediated activation of ERK, JNK and NF-kappa-B pathways, inhibiting MAP3K3-mediated interleukin-8 production.</text>
</comment>
<comment type="catalytic activity">
    <reaction evidence="9">
        <text>L-seryl-[protein] + ATP = O-phospho-L-seryl-[protein] + ADP + H(+)</text>
        <dbReference type="Rhea" id="RHEA:17989"/>
        <dbReference type="Rhea" id="RHEA-COMP:9863"/>
        <dbReference type="Rhea" id="RHEA-COMP:11604"/>
        <dbReference type="ChEBI" id="CHEBI:15378"/>
        <dbReference type="ChEBI" id="CHEBI:29999"/>
        <dbReference type="ChEBI" id="CHEBI:30616"/>
        <dbReference type="ChEBI" id="CHEBI:83421"/>
        <dbReference type="ChEBI" id="CHEBI:456216"/>
        <dbReference type="EC" id="2.7.11.1"/>
    </reaction>
</comment>
<comment type="catalytic activity">
    <reaction evidence="9">
        <text>L-threonyl-[protein] + ATP = O-phospho-L-threonyl-[protein] + ADP + H(+)</text>
        <dbReference type="Rhea" id="RHEA:46608"/>
        <dbReference type="Rhea" id="RHEA-COMP:11060"/>
        <dbReference type="Rhea" id="RHEA-COMP:11605"/>
        <dbReference type="ChEBI" id="CHEBI:15378"/>
        <dbReference type="ChEBI" id="CHEBI:30013"/>
        <dbReference type="ChEBI" id="CHEBI:30616"/>
        <dbReference type="ChEBI" id="CHEBI:61977"/>
        <dbReference type="ChEBI" id="CHEBI:456216"/>
        <dbReference type="EC" id="2.7.11.1"/>
    </reaction>
</comment>
<comment type="activity regulation">
    <text evidence="9">Kinase activity is inhibited by ASC24.</text>
</comment>
<comment type="subunit">
    <text evidence="6 9 10">Heterodimerizes (via N-terminus) with BRAF (via N-terminus) in a MAP2K1/MEK1-dependent manner (PubMed:29433126). Interacts with BRAF; this increases the low intrinsic protein kinase activity of KSR2 (PubMed:21441910). Interacts with MAP2K1, forming a heterodimer that can dimerize to form a heterotetramer (PubMed:12975377, PubMed:21441910, PubMed:29433126). Interacts with MAP3K8, MAPK, RAS and RAF (PubMed:12975377).</text>
</comment>
<comment type="interaction">
    <interactant intactId="EBI-6424389">
        <id>Q6VAB6</id>
    </interactant>
    <interactant intactId="EBI-295634">
        <id>Q16543</id>
        <label>CDC37</label>
    </interactant>
    <organismsDiffer>false</organismsDiffer>
    <experiments>7</experiments>
</comment>
<comment type="interaction">
    <interactant intactId="EBI-6424389">
        <id>Q6VAB6</id>
    </interactant>
    <interactant intactId="EBI-3867333">
        <id>A8MQ03</id>
        <label>CYSRT1</label>
    </interactant>
    <organismsDiffer>false</organismsDiffer>
    <experiments>3</experiments>
</comment>
<comment type="interaction">
    <interactant intactId="EBI-6424389">
        <id>Q6VAB6</id>
    </interactant>
    <interactant intactId="EBI-306914">
        <id>Q13451</id>
        <label>FKBP5</label>
    </interactant>
    <organismsDiffer>false</organismsDiffer>
    <experiments>7</experiments>
</comment>
<comment type="interaction">
    <interactant intactId="EBI-6424389">
        <id>Q6VAB6</id>
    </interactant>
    <interactant intactId="EBI-296047">
        <id>P07900</id>
        <label>HSP90AA1</label>
    </interactant>
    <organismsDiffer>false</organismsDiffer>
    <experiments>6</experiments>
</comment>
<comment type="interaction">
    <interactant intactId="EBI-15916808">
        <id>Q6VAB6-1</id>
    </interactant>
    <interactant intactId="EBI-1631983">
        <id>P29678</id>
        <label>MAP2K1</label>
    </interactant>
    <organismsDiffer>true</organismsDiffer>
    <experiments>6</experiments>
</comment>
<comment type="subcellular location">
    <subcellularLocation>
        <location evidence="1">Cytoplasm</location>
    </subcellularLocation>
    <subcellularLocation>
        <location evidence="1">Membrane</location>
        <topology evidence="1">Peripheral membrane protein</topology>
    </subcellularLocation>
</comment>
<comment type="alternative products">
    <event type="alternative splicing"/>
    <isoform>
        <id>Q6VAB6-1</id>
        <name>1</name>
        <sequence type="displayed"/>
    </isoform>
    <isoform>
        <id>Q6VAB6-2</id>
        <name>2</name>
        <sequence type="described" ref="VSP_012234 VSP_012235 VSP_012236 VSP_012237"/>
    </isoform>
</comment>
<comment type="tissue specificity">
    <text evidence="6">Mainly expressed in brain and kidney.</text>
</comment>
<comment type="domain">
    <text>The protein kinase domain is predicted to be catalytically inactive and seems to have very low intrinsic kinase activity. This low kinase activity can be increased by interaction with BRAF.</text>
</comment>
<comment type="PTM">
    <text evidence="1">Phosphorylated on Ser-474 by MARK3.</text>
</comment>
<comment type="similarity">
    <text evidence="12">Belongs to the protein kinase superfamily. TKL Ser/Thr protein kinase family.</text>
</comment>
<comment type="caution">
    <text evidence="13">KSR2 binds ATP and has very low in vitro protein kinase activity; the physiological relevance of this activity is unknown. KSR2 is proposed to be in an inactive conformation by itself or in complex with MAP2K1. Interaction with BRAF is proposed to induce a conformation change that increases the low intrinsic kinase activity (PubMed:21441910).</text>
</comment>
<dbReference type="EC" id="2.7.11.1" evidence="9"/>
<dbReference type="EMBL" id="AK098831">
    <property type="protein sequence ID" value="BAC05426.1"/>
    <property type="molecule type" value="mRNA"/>
</dbReference>
<dbReference type="EMBL" id="AC073864">
    <property type="status" value="NOT_ANNOTATED_CDS"/>
    <property type="molecule type" value="Genomic_DNA"/>
</dbReference>
<dbReference type="EMBL" id="AC079127">
    <property type="status" value="NOT_ANNOTATED_CDS"/>
    <property type="molecule type" value="Genomic_DNA"/>
</dbReference>
<dbReference type="EMBL" id="AC084291">
    <property type="status" value="NOT_ANNOTATED_CDS"/>
    <property type="molecule type" value="Genomic_DNA"/>
</dbReference>
<dbReference type="EMBL" id="AC092936">
    <property type="status" value="NOT_ANNOTATED_CDS"/>
    <property type="molecule type" value="Genomic_DNA"/>
</dbReference>
<dbReference type="EMBL" id="AY345972">
    <property type="protein sequence ID" value="AAQ24226.1"/>
    <property type="molecule type" value="mRNA"/>
</dbReference>
<dbReference type="EMBL" id="BC107106">
    <property type="protein sequence ID" value="AAI07107.1"/>
    <property type="molecule type" value="mRNA"/>
</dbReference>
<dbReference type="EMBL" id="BC107107">
    <property type="protein sequence ID" value="AAI07108.1"/>
    <property type="molecule type" value="mRNA"/>
</dbReference>
<dbReference type="EMBL" id="BC127603">
    <property type="protein sequence ID" value="AAI27604.1"/>
    <property type="molecule type" value="mRNA"/>
</dbReference>
<dbReference type="CCDS" id="CCDS61250.2">
    <molecule id="Q6VAB6-1"/>
</dbReference>
<dbReference type="RefSeq" id="NP_775869.3">
    <molecule id="Q6VAB6-1"/>
    <property type="nucleotide sequence ID" value="NM_173598.4"/>
</dbReference>
<dbReference type="RefSeq" id="XP_011536527.1">
    <property type="nucleotide sequence ID" value="XM_011538225.2"/>
</dbReference>
<dbReference type="PDB" id="2Y4I">
    <property type="method" value="X-ray"/>
    <property type="resolution" value="3.46 A"/>
    <property type="chains" value="B=634-950"/>
</dbReference>
<dbReference type="PDB" id="5KKR">
    <property type="method" value="X-ray"/>
    <property type="resolution" value="3.51 A"/>
    <property type="chains" value="B=634-950"/>
</dbReference>
<dbReference type="PDB" id="7JUQ">
    <property type="method" value="X-ray"/>
    <property type="resolution" value="3.22 A"/>
    <property type="chains" value="B=634-950"/>
</dbReference>
<dbReference type="PDB" id="7JUR">
    <property type="method" value="X-ray"/>
    <property type="resolution" value="2.82 A"/>
    <property type="chains" value="B=634-950"/>
</dbReference>
<dbReference type="PDB" id="7JUS">
    <property type="method" value="X-ray"/>
    <property type="resolution" value="2.99 A"/>
    <property type="chains" value="B=634-950"/>
</dbReference>
<dbReference type="PDB" id="7JUT">
    <property type="method" value="X-ray"/>
    <property type="resolution" value="3.09 A"/>
    <property type="chains" value="B=634-950"/>
</dbReference>
<dbReference type="PDB" id="7JUU">
    <property type="method" value="X-ray"/>
    <property type="resolution" value="3.19 A"/>
    <property type="chains" value="B=634-950"/>
</dbReference>
<dbReference type="PDB" id="7JUV">
    <property type="method" value="X-ray"/>
    <property type="resolution" value="3.36 A"/>
    <property type="chains" value="B=634-950"/>
</dbReference>
<dbReference type="PDB" id="7UMB">
    <property type="method" value="X-ray"/>
    <property type="resolution" value="3.23 A"/>
    <property type="chains" value="B=634-950"/>
</dbReference>
<dbReference type="PDBsum" id="2Y4I"/>
<dbReference type="PDBsum" id="5KKR"/>
<dbReference type="PDBsum" id="7JUQ"/>
<dbReference type="PDBsum" id="7JUR"/>
<dbReference type="PDBsum" id="7JUS"/>
<dbReference type="PDBsum" id="7JUT"/>
<dbReference type="PDBsum" id="7JUU"/>
<dbReference type="PDBsum" id="7JUV"/>
<dbReference type="PDBsum" id="7UMB"/>
<dbReference type="SMR" id="Q6VAB6"/>
<dbReference type="BioGRID" id="129567">
    <property type="interactions" value="45"/>
</dbReference>
<dbReference type="CORUM" id="Q6VAB6"/>
<dbReference type="DIP" id="DIP-59195N"/>
<dbReference type="FunCoup" id="Q6VAB6">
    <property type="interactions" value="999"/>
</dbReference>
<dbReference type="IntAct" id="Q6VAB6">
    <property type="interactions" value="147"/>
</dbReference>
<dbReference type="MINT" id="Q6VAB6"/>
<dbReference type="STRING" id="9606.ENSP00000389715"/>
<dbReference type="BindingDB" id="Q6VAB6"/>
<dbReference type="ChEMBL" id="CHEMBL3627583"/>
<dbReference type="GlyGen" id="Q6VAB6">
    <property type="glycosylation" value="4 sites"/>
</dbReference>
<dbReference type="iPTMnet" id="Q6VAB6"/>
<dbReference type="PhosphoSitePlus" id="Q6VAB6"/>
<dbReference type="BioMuta" id="KSR2"/>
<dbReference type="DMDM" id="148886599"/>
<dbReference type="jPOST" id="Q6VAB6"/>
<dbReference type="MassIVE" id="Q6VAB6"/>
<dbReference type="PaxDb" id="9606-ENSP00000389715"/>
<dbReference type="PeptideAtlas" id="Q6VAB6"/>
<dbReference type="ProteomicsDB" id="67721">
    <molecule id="Q6VAB6-1"/>
</dbReference>
<dbReference type="ProteomicsDB" id="67722">
    <molecule id="Q6VAB6-2"/>
</dbReference>
<dbReference type="Antibodypedia" id="31354">
    <property type="antibodies" value="363 antibodies from 27 providers"/>
</dbReference>
<dbReference type="DNASU" id="283455"/>
<dbReference type="Ensembl" id="ENST00000339824.7">
    <molecule id="Q6VAB6-1"/>
    <property type="protein sequence ID" value="ENSP00000339952.4"/>
    <property type="gene ID" value="ENSG00000171435.15"/>
</dbReference>
<dbReference type="GeneID" id="283455"/>
<dbReference type="KEGG" id="hsa:283455"/>
<dbReference type="MANE-Select" id="ENST00000339824.7">
    <property type="protein sequence ID" value="ENSP00000339952.4"/>
    <property type="RefSeq nucleotide sequence ID" value="NM_173598.6"/>
    <property type="RefSeq protein sequence ID" value="NP_775869.4"/>
</dbReference>
<dbReference type="UCSC" id="uc058tua.1">
    <molecule id="Q6VAB6-1"/>
    <property type="organism name" value="human"/>
</dbReference>
<dbReference type="AGR" id="HGNC:18610"/>
<dbReference type="CTD" id="283455"/>
<dbReference type="DisGeNET" id="283455"/>
<dbReference type="GeneCards" id="KSR2"/>
<dbReference type="HGNC" id="HGNC:18610">
    <property type="gene designation" value="KSR2"/>
</dbReference>
<dbReference type="HPA" id="ENSG00000171435">
    <property type="expression patterns" value="Tissue enhanced (brain, pituitary gland)"/>
</dbReference>
<dbReference type="MalaCards" id="KSR2"/>
<dbReference type="MIM" id="610737">
    <property type="type" value="gene"/>
</dbReference>
<dbReference type="neXtProt" id="NX_Q6VAB6"/>
<dbReference type="OpenTargets" id="ENSG00000171435"/>
<dbReference type="PharmGKB" id="PA134914125"/>
<dbReference type="VEuPathDB" id="HostDB:ENSG00000171435"/>
<dbReference type="eggNOG" id="KOG0193">
    <property type="taxonomic scope" value="Eukaryota"/>
</dbReference>
<dbReference type="GeneTree" id="ENSGT00940000158519"/>
<dbReference type="HOGENOM" id="CLU_006812_1_0_1"/>
<dbReference type="InParanoid" id="Q6VAB6"/>
<dbReference type="OMA" id="DSWDRPH"/>
<dbReference type="OrthoDB" id="774951at2759"/>
<dbReference type="PAN-GO" id="Q6VAB6">
    <property type="GO annotations" value="6 GO annotations based on evolutionary models"/>
</dbReference>
<dbReference type="PhylomeDB" id="Q6VAB6"/>
<dbReference type="TreeFam" id="TF317006"/>
<dbReference type="BRENDA" id="2.7.11.25">
    <property type="organism ID" value="2681"/>
</dbReference>
<dbReference type="PathwayCommons" id="Q6VAB6"/>
<dbReference type="Reactome" id="R-HSA-5674135">
    <property type="pathway name" value="MAP2K and MAPK activation"/>
</dbReference>
<dbReference type="Reactome" id="R-HSA-6802946">
    <property type="pathway name" value="Signaling by moderate kinase activity BRAF mutants"/>
</dbReference>
<dbReference type="Reactome" id="R-HSA-6802948">
    <property type="pathway name" value="Signaling by high-kinase activity BRAF mutants"/>
</dbReference>
<dbReference type="Reactome" id="R-HSA-6802952">
    <property type="pathway name" value="Signaling by BRAF and RAF1 fusions"/>
</dbReference>
<dbReference type="Reactome" id="R-HSA-6802955">
    <property type="pathway name" value="Paradoxical activation of RAF signaling by kinase inactive BRAF"/>
</dbReference>
<dbReference type="Reactome" id="R-HSA-9649948">
    <property type="pathway name" value="Signaling downstream of RAS mutants"/>
</dbReference>
<dbReference type="Reactome" id="R-HSA-9656223">
    <property type="pathway name" value="Signaling by RAF1 mutants"/>
</dbReference>
<dbReference type="SignaLink" id="Q6VAB6"/>
<dbReference type="SIGNOR" id="Q6VAB6"/>
<dbReference type="BioGRID-ORCS" id="283455">
    <property type="hits" value="13 hits in 1165 CRISPR screens"/>
</dbReference>
<dbReference type="ChiTaRS" id="KSR2">
    <property type="organism name" value="human"/>
</dbReference>
<dbReference type="EvolutionaryTrace" id="Q6VAB6"/>
<dbReference type="GenomeRNAi" id="283455"/>
<dbReference type="Pharos" id="Q6VAB6">
    <property type="development level" value="Tbio"/>
</dbReference>
<dbReference type="PRO" id="PR:Q6VAB6"/>
<dbReference type="Proteomes" id="UP000005640">
    <property type="component" value="Chromosome 12"/>
</dbReference>
<dbReference type="RNAct" id="Q6VAB6">
    <property type="molecule type" value="protein"/>
</dbReference>
<dbReference type="Bgee" id="ENSG00000171435">
    <property type="expression patterns" value="Expressed in Brodmann (1909) area 23 and 84 other cell types or tissues"/>
</dbReference>
<dbReference type="ExpressionAtlas" id="Q6VAB6">
    <property type="expression patterns" value="baseline and differential"/>
</dbReference>
<dbReference type="GO" id="GO:0005737">
    <property type="term" value="C:cytoplasm"/>
    <property type="evidence" value="ECO:0000318"/>
    <property type="project" value="GO_Central"/>
</dbReference>
<dbReference type="GO" id="GO:0005829">
    <property type="term" value="C:cytosol"/>
    <property type="evidence" value="ECO:0000318"/>
    <property type="project" value="GO_Central"/>
</dbReference>
<dbReference type="GO" id="GO:0005886">
    <property type="term" value="C:plasma membrane"/>
    <property type="evidence" value="ECO:0000318"/>
    <property type="project" value="GO_Central"/>
</dbReference>
<dbReference type="GO" id="GO:0005524">
    <property type="term" value="F:ATP binding"/>
    <property type="evidence" value="ECO:0007669"/>
    <property type="project" value="UniProtKB-KW"/>
</dbReference>
<dbReference type="GO" id="GO:0005078">
    <property type="term" value="F:MAP-kinase scaffold activity"/>
    <property type="evidence" value="ECO:0007669"/>
    <property type="project" value="Ensembl"/>
</dbReference>
<dbReference type="GO" id="GO:0031434">
    <property type="term" value="F:mitogen-activated protein kinase kinase binding"/>
    <property type="evidence" value="ECO:0007669"/>
    <property type="project" value="Ensembl"/>
</dbReference>
<dbReference type="GO" id="GO:0004672">
    <property type="term" value="F:protein kinase activity"/>
    <property type="evidence" value="ECO:0000318"/>
    <property type="project" value="GO_Central"/>
</dbReference>
<dbReference type="GO" id="GO:0106310">
    <property type="term" value="F:protein serine kinase activity"/>
    <property type="evidence" value="ECO:0007669"/>
    <property type="project" value="RHEA"/>
</dbReference>
<dbReference type="GO" id="GO:0004674">
    <property type="term" value="F:protein serine/threonine kinase activity"/>
    <property type="evidence" value="ECO:0000314"/>
    <property type="project" value="FlyBase"/>
</dbReference>
<dbReference type="GO" id="GO:0008270">
    <property type="term" value="F:zinc ion binding"/>
    <property type="evidence" value="ECO:0007669"/>
    <property type="project" value="UniProtKB-KW"/>
</dbReference>
<dbReference type="GO" id="GO:0019722">
    <property type="term" value="P:calcium-mediated signaling"/>
    <property type="evidence" value="ECO:0000318"/>
    <property type="project" value="GO_Central"/>
</dbReference>
<dbReference type="GO" id="GO:0120162">
    <property type="term" value="P:positive regulation of cold-induced thermogenesis"/>
    <property type="evidence" value="ECO:0000250"/>
    <property type="project" value="YuBioLab"/>
</dbReference>
<dbReference type="GO" id="GO:0043410">
    <property type="term" value="P:positive regulation of MAPK cascade"/>
    <property type="evidence" value="ECO:0007669"/>
    <property type="project" value="Ensembl"/>
</dbReference>
<dbReference type="GO" id="GO:0007265">
    <property type="term" value="P:Ras protein signal transduction"/>
    <property type="evidence" value="ECO:0000318"/>
    <property type="project" value="GO_Central"/>
</dbReference>
<dbReference type="CDD" id="cd14153">
    <property type="entry name" value="PK_KSR2"/>
    <property type="match status" value="1"/>
</dbReference>
<dbReference type="FunFam" id="3.30.200.20:FF:000034">
    <property type="entry name" value="Kinase suppressor of Ras 1"/>
    <property type="match status" value="1"/>
</dbReference>
<dbReference type="FunFam" id="1.10.510.10:FF:000107">
    <property type="entry name" value="kinase suppressor of Ras 1"/>
    <property type="match status" value="1"/>
</dbReference>
<dbReference type="FunFam" id="1.10.150.50:FF:000031">
    <property type="entry name" value="Kinase suppressor of Ras 2"/>
    <property type="match status" value="1"/>
</dbReference>
<dbReference type="FunFam" id="3.30.60.20:FF:000010">
    <property type="entry name" value="Putative kinase suppressor of Ras 1"/>
    <property type="match status" value="1"/>
</dbReference>
<dbReference type="Gene3D" id="3.30.60.20">
    <property type="match status" value="1"/>
</dbReference>
<dbReference type="Gene3D" id="6.10.140.1120">
    <property type="match status" value="1"/>
</dbReference>
<dbReference type="Gene3D" id="3.30.200.20">
    <property type="entry name" value="Phosphorylase Kinase, domain 1"/>
    <property type="match status" value="1"/>
</dbReference>
<dbReference type="Gene3D" id="1.10.150.50">
    <property type="entry name" value="Transcription Factor, Ets-1"/>
    <property type="match status" value="1"/>
</dbReference>
<dbReference type="Gene3D" id="1.10.510.10">
    <property type="entry name" value="Transferase(Phosphotransferase) domain 1"/>
    <property type="match status" value="1"/>
</dbReference>
<dbReference type="InterPro" id="IPR046349">
    <property type="entry name" value="C1-like_sf"/>
</dbReference>
<dbReference type="InterPro" id="IPR011009">
    <property type="entry name" value="Kinase-like_dom_sf"/>
</dbReference>
<dbReference type="InterPro" id="IPR025561">
    <property type="entry name" value="KSR_SAM-like_dom"/>
</dbReference>
<dbReference type="InterPro" id="IPR002219">
    <property type="entry name" value="PE/DAG-bd"/>
</dbReference>
<dbReference type="InterPro" id="IPR000719">
    <property type="entry name" value="Prot_kinase_dom"/>
</dbReference>
<dbReference type="InterPro" id="IPR013761">
    <property type="entry name" value="SAM/pointed_sf"/>
</dbReference>
<dbReference type="InterPro" id="IPR046861">
    <property type="entry name" value="SAM_KSR1_N"/>
</dbReference>
<dbReference type="InterPro" id="IPR046933">
    <property type="entry name" value="SAM_KSR1_N_sf"/>
</dbReference>
<dbReference type="InterPro" id="IPR001245">
    <property type="entry name" value="Ser-Thr/Tyr_kinase_cat_dom"/>
</dbReference>
<dbReference type="InterPro" id="IPR008271">
    <property type="entry name" value="Ser/Thr_kinase_AS"/>
</dbReference>
<dbReference type="InterPro" id="IPR050167">
    <property type="entry name" value="Ser_Thr_protein_kinase"/>
</dbReference>
<dbReference type="PANTHER" id="PTHR23257:SF775">
    <property type="entry name" value="KINASE SUPPRESSOR OF RAS 2"/>
    <property type="match status" value="1"/>
</dbReference>
<dbReference type="PANTHER" id="PTHR23257">
    <property type="entry name" value="SERINE-THREONINE PROTEIN KINASE"/>
    <property type="match status" value="1"/>
</dbReference>
<dbReference type="Pfam" id="PF07714">
    <property type="entry name" value="PK_Tyr_Ser-Thr"/>
    <property type="match status" value="1"/>
</dbReference>
<dbReference type="Pfam" id="PF13543">
    <property type="entry name" value="SAM_KSR1"/>
    <property type="match status" value="1"/>
</dbReference>
<dbReference type="Pfam" id="PF20406">
    <property type="entry name" value="SAM_KSR1_N"/>
    <property type="match status" value="1"/>
</dbReference>
<dbReference type="SMART" id="SM00109">
    <property type="entry name" value="C1"/>
    <property type="match status" value="1"/>
</dbReference>
<dbReference type="SMART" id="SM00220">
    <property type="entry name" value="S_TKc"/>
    <property type="match status" value="1"/>
</dbReference>
<dbReference type="SUPFAM" id="SSF57889">
    <property type="entry name" value="Cysteine-rich domain"/>
    <property type="match status" value="1"/>
</dbReference>
<dbReference type="SUPFAM" id="SSF56112">
    <property type="entry name" value="Protein kinase-like (PK-like)"/>
    <property type="match status" value="1"/>
</dbReference>
<dbReference type="PROSITE" id="PS50011">
    <property type="entry name" value="PROTEIN_KINASE_DOM"/>
    <property type="match status" value="1"/>
</dbReference>
<dbReference type="PROSITE" id="PS00108">
    <property type="entry name" value="PROTEIN_KINASE_ST"/>
    <property type="match status" value="1"/>
</dbReference>
<dbReference type="PROSITE" id="PS00479">
    <property type="entry name" value="ZF_DAG_PE_1"/>
    <property type="match status" value="1"/>
</dbReference>
<dbReference type="PROSITE" id="PS50081">
    <property type="entry name" value="ZF_DAG_PE_2"/>
    <property type="match status" value="1"/>
</dbReference>
<sequence>MDEENMTKSEEQQPLSLQKALQQCELVQNMIDLSISNLEGLRTKCATSNDLTQKEIRTLESKLVKYFSRQLSCKKKVALQERNAELDGFPQLRHWFRIVDVRKEVLEEISPGQLSLEDLLEMTDEQVCETVEKYGANREECARLNASLSCLRNVHMSGGNLSKQDWTIQWPTTETGKENNPVCPPEPTPWIRTHLSQSPRVPSKCVQHYCHTSPTPGAPVYTHVDRLTVDAYPGLCPPPPLESGHRSLPPSPRQRHAVRTPPRTPNIVTTVTPPGTPPMRKKNKLKPPGTPPPSSRKLIHLIPGFTALHRSKSHEFQLGHRVDEAHTPKAKKKSKPLNLKIHSSVGSCENIPSQQRSPLLSERSLRSFFVGHAPFLPSTPPVHTEANFSANTLSVPRWSPQIPRRDLGNSIKHRFSTKYWMSQTCTVCGKGMLFGLKCKNCKLKCHNKCTKEAPPCHLLIIHRGDPARLVRTESVPCDINNPLRKPPRYSDLHISQTLPKTNKINKDHIPVPYQPDSSSNPSSTTSSTPSSPAPPLPPSATPPSPLHPSPQCTRQQKNFNLPASHYYKYKQQFIFPDVVPVPETPTRAPQVILHPVTSNPILEGNPLLQIEVEPTSENEEVHDEAEESEDDFEEMNLSLLSARSFPRKASQTSIFLQEWDIPFEQLEIGELIGKGRFGQVYHGRWHGEVAIRLIDIERDNEDQLKAFKREVMAYRQTRHENVVLFMGACMSPPHLAIITSLCKGRTLYSVVRDAKIVLDVNKTRQIAQEIVKGMGYLHAKGILHKDLKSKNVFYDNGKVVITDFGLFSISGVLQAGRREDKLRIQNGWLCHLAPEIIRQLSPDTEEDKLPFSKHSDVFALGTIWYELHAREWPFKTQPAEAIIWQMGTGMKPNLSQIGMGKEISDILLFCWAFEQEERPTFTKLMDMLEKLPKRNRRLSHPGHFWKSAEL</sequence>
<name>KSR2_HUMAN</name>
<reference key="1">
    <citation type="journal article" date="2004" name="Nat. Genet.">
        <title>Complete sequencing and characterization of 21,243 full-length human cDNAs.</title>
        <authorList>
            <person name="Ota T."/>
            <person name="Suzuki Y."/>
            <person name="Nishikawa T."/>
            <person name="Otsuki T."/>
            <person name="Sugiyama T."/>
            <person name="Irie R."/>
            <person name="Wakamatsu A."/>
            <person name="Hayashi K."/>
            <person name="Sato H."/>
            <person name="Nagai K."/>
            <person name="Kimura K."/>
            <person name="Makita H."/>
            <person name="Sekine M."/>
            <person name="Obayashi M."/>
            <person name="Nishi T."/>
            <person name="Shibahara T."/>
            <person name="Tanaka T."/>
            <person name="Ishii S."/>
            <person name="Yamamoto J."/>
            <person name="Saito K."/>
            <person name="Kawai Y."/>
            <person name="Isono Y."/>
            <person name="Nakamura Y."/>
            <person name="Nagahari K."/>
            <person name="Murakami K."/>
            <person name="Yasuda T."/>
            <person name="Iwayanagi T."/>
            <person name="Wagatsuma M."/>
            <person name="Shiratori A."/>
            <person name="Sudo H."/>
            <person name="Hosoiri T."/>
            <person name="Kaku Y."/>
            <person name="Kodaira H."/>
            <person name="Kondo H."/>
            <person name="Sugawara M."/>
            <person name="Takahashi M."/>
            <person name="Kanda K."/>
            <person name="Yokoi T."/>
            <person name="Furuya T."/>
            <person name="Kikkawa E."/>
            <person name="Omura Y."/>
            <person name="Abe K."/>
            <person name="Kamihara K."/>
            <person name="Katsuta N."/>
            <person name="Sato K."/>
            <person name="Tanikawa M."/>
            <person name="Yamazaki M."/>
            <person name="Ninomiya K."/>
            <person name="Ishibashi T."/>
            <person name="Yamashita H."/>
            <person name="Murakawa K."/>
            <person name="Fujimori K."/>
            <person name="Tanai H."/>
            <person name="Kimata M."/>
            <person name="Watanabe M."/>
            <person name="Hiraoka S."/>
            <person name="Chiba Y."/>
            <person name="Ishida S."/>
            <person name="Ono Y."/>
            <person name="Takiguchi S."/>
            <person name="Watanabe S."/>
            <person name="Yosida M."/>
            <person name="Hotuta T."/>
            <person name="Kusano J."/>
            <person name="Kanehori K."/>
            <person name="Takahashi-Fujii A."/>
            <person name="Hara H."/>
            <person name="Tanase T.-O."/>
            <person name="Nomura Y."/>
            <person name="Togiya S."/>
            <person name="Komai F."/>
            <person name="Hara R."/>
            <person name="Takeuchi K."/>
            <person name="Arita M."/>
            <person name="Imose N."/>
            <person name="Musashino K."/>
            <person name="Yuuki H."/>
            <person name="Oshima A."/>
            <person name="Sasaki N."/>
            <person name="Aotsuka S."/>
            <person name="Yoshikawa Y."/>
            <person name="Matsunawa H."/>
            <person name="Ichihara T."/>
            <person name="Shiohata N."/>
            <person name="Sano S."/>
            <person name="Moriya S."/>
            <person name="Momiyama H."/>
            <person name="Satoh N."/>
            <person name="Takami S."/>
            <person name="Terashima Y."/>
            <person name="Suzuki O."/>
            <person name="Nakagawa S."/>
            <person name="Senoh A."/>
            <person name="Mizoguchi H."/>
            <person name="Goto Y."/>
            <person name="Shimizu F."/>
            <person name="Wakebe H."/>
            <person name="Hishigaki H."/>
            <person name="Watanabe T."/>
            <person name="Sugiyama A."/>
            <person name="Takemoto M."/>
            <person name="Kawakami B."/>
            <person name="Yamazaki M."/>
            <person name="Watanabe K."/>
            <person name="Kumagai A."/>
            <person name="Itakura S."/>
            <person name="Fukuzumi Y."/>
            <person name="Fujimori Y."/>
            <person name="Komiyama M."/>
            <person name="Tashiro H."/>
            <person name="Tanigami A."/>
            <person name="Fujiwara T."/>
            <person name="Ono T."/>
            <person name="Yamada K."/>
            <person name="Fujii Y."/>
            <person name="Ozaki K."/>
            <person name="Hirao M."/>
            <person name="Ohmori Y."/>
            <person name="Kawabata A."/>
            <person name="Hikiji T."/>
            <person name="Kobatake N."/>
            <person name="Inagaki H."/>
            <person name="Ikema Y."/>
            <person name="Okamoto S."/>
            <person name="Okitani R."/>
            <person name="Kawakami T."/>
            <person name="Noguchi S."/>
            <person name="Itoh T."/>
            <person name="Shigeta K."/>
            <person name="Senba T."/>
            <person name="Matsumura K."/>
            <person name="Nakajima Y."/>
            <person name="Mizuno T."/>
            <person name="Morinaga M."/>
            <person name="Sasaki M."/>
            <person name="Togashi T."/>
            <person name="Oyama M."/>
            <person name="Hata H."/>
            <person name="Watanabe M."/>
            <person name="Komatsu T."/>
            <person name="Mizushima-Sugano J."/>
            <person name="Satoh T."/>
            <person name="Shirai Y."/>
            <person name="Takahashi Y."/>
            <person name="Nakagawa K."/>
            <person name="Okumura K."/>
            <person name="Nagase T."/>
            <person name="Nomura N."/>
            <person name="Kikuchi H."/>
            <person name="Masuho Y."/>
            <person name="Yamashita R."/>
            <person name="Nakai K."/>
            <person name="Yada T."/>
            <person name="Nakamura Y."/>
            <person name="Ohara O."/>
            <person name="Isogai T."/>
            <person name="Sugano S."/>
        </authorList>
    </citation>
    <scope>NUCLEOTIDE SEQUENCE [LARGE SCALE MRNA] (ISOFORM 2)</scope>
    <source>
        <tissue>Testis</tissue>
    </source>
</reference>
<reference key="2">
    <citation type="journal article" date="2006" name="Nature">
        <title>The finished DNA sequence of human chromosome 12.</title>
        <authorList>
            <person name="Scherer S.E."/>
            <person name="Muzny D.M."/>
            <person name="Buhay C.J."/>
            <person name="Chen R."/>
            <person name="Cree A."/>
            <person name="Ding Y."/>
            <person name="Dugan-Rocha S."/>
            <person name="Gill R."/>
            <person name="Gunaratne P."/>
            <person name="Harris R.A."/>
            <person name="Hawes A.C."/>
            <person name="Hernandez J."/>
            <person name="Hodgson A.V."/>
            <person name="Hume J."/>
            <person name="Jackson A."/>
            <person name="Khan Z.M."/>
            <person name="Kovar-Smith C."/>
            <person name="Lewis L.R."/>
            <person name="Lozado R.J."/>
            <person name="Metzker M.L."/>
            <person name="Milosavljevic A."/>
            <person name="Miner G.R."/>
            <person name="Montgomery K.T."/>
            <person name="Morgan M.B."/>
            <person name="Nazareth L.V."/>
            <person name="Scott G."/>
            <person name="Sodergren E."/>
            <person name="Song X.-Z."/>
            <person name="Steffen D."/>
            <person name="Lovering R.C."/>
            <person name="Wheeler D.A."/>
            <person name="Worley K.C."/>
            <person name="Yuan Y."/>
            <person name="Zhang Z."/>
            <person name="Adams C.Q."/>
            <person name="Ansari-Lari M.A."/>
            <person name="Ayele M."/>
            <person name="Brown M.J."/>
            <person name="Chen G."/>
            <person name="Chen Z."/>
            <person name="Clerc-Blankenburg K.P."/>
            <person name="Davis C."/>
            <person name="Delgado O."/>
            <person name="Dinh H.H."/>
            <person name="Draper H."/>
            <person name="Gonzalez-Garay M.L."/>
            <person name="Havlak P."/>
            <person name="Jackson L.R."/>
            <person name="Jacob L.S."/>
            <person name="Kelly S.H."/>
            <person name="Li L."/>
            <person name="Li Z."/>
            <person name="Liu J."/>
            <person name="Liu W."/>
            <person name="Lu J."/>
            <person name="Maheshwari M."/>
            <person name="Nguyen B.-V."/>
            <person name="Okwuonu G.O."/>
            <person name="Pasternak S."/>
            <person name="Perez L.M."/>
            <person name="Plopper F.J.H."/>
            <person name="Santibanez J."/>
            <person name="Shen H."/>
            <person name="Tabor P.E."/>
            <person name="Verduzco D."/>
            <person name="Waldron L."/>
            <person name="Wang Q."/>
            <person name="Williams G.A."/>
            <person name="Zhang J."/>
            <person name="Zhou J."/>
            <person name="Allen C.C."/>
            <person name="Amin A.G."/>
            <person name="Anyalebechi V."/>
            <person name="Bailey M."/>
            <person name="Barbaria J.A."/>
            <person name="Bimage K.E."/>
            <person name="Bryant N.P."/>
            <person name="Burch P.E."/>
            <person name="Burkett C.E."/>
            <person name="Burrell K.L."/>
            <person name="Calderon E."/>
            <person name="Cardenas V."/>
            <person name="Carter K."/>
            <person name="Casias K."/>
            <person name="Cavazos I."/>
            <person name="Cavazos S.R."/>
            <person name="Ceasar H."/>
            <person name="Chacko J."/>
            <person name="Chan S.N."/>
            <person name="Chavez D."/>
            <person name="Christopoulos C."/>
            <person name="Chu J."/>
            <person name="Cockrell R."/>
            <person name="Cox C.D."/>
            <person name="Dang M."/>
            <person name="Dathorne S.R."/>
            <person name="David R."/>
            <person name="Davis C.M."/>
            <person name="Davy-Carroll L."/>
            <person name="Deshazo D.R."/>
            <person name="Donlin J.E."/>
            <person name="D'Souza L."/>
            <person name="Eaves K.A."/>
            <person name="Egan A."/>
            <person name="Emery-Cohen A.J."/>
            <person name="Escotto M."/>
            <person name="Flagg N."/>
            <person name="Forbes L.D."/>
            <person name="Gabisi A.M."/>
            <person name="Garza M."/>
            <person name="Hamilton C."/>
            <person name="Henderson N."/>
            <person name="Hernandez O."/>
            <person name="Hines S."/>
            <person name="Hogues M.E."/>
            <person name="Huang M."/>
            <person name="Idlebird D.G."/>
            <person name="Johnson R."/>
            <person name="Jolivet A."/>
            <person name="Jones S."/>
            <person name="Kagan R."/>
            <person name="King L.M."/>
            <person name="Leal B."/>
            <person name="Lebow H."/>
            <person name="Lee S."/>
            <person name="LeVan J.M."/>
            <person name="Lewis L.C."/>
            <person name="London P."/>
            <person name="Lorensuhewa L.M."/>
            <person name="Loulseged H."/>
            <person name="Lovett D.A."/>
            <person name="Lucier A."/>
            <person name="Lucier R.L."/>
            <person name="Ma J."/>
            <person name="Madu R.C."/>
            <person name="Mapua P."/>
            <person name="Martindale A.D."/>
            <person name="Martinez E."/>
            <person name="Massey E."/>
            <person name="Mawhiney S."/>
            <person name="Meador M.G."/>
            <person name="Mendez S."/>
            <person name="Mercado C."/>
            <person name="Mercado I.C."/>
            <person name="Merritt C.E."/>
            <person name="Miner Z.L."/>
            <person name="Minja E."/>
            <person name="Mitchell T."/>
            <person name="Mohabbat F."/>
            <person name="Mohabbat K."/>
            <person name="Montgomery B."/>
            <person name="Moore N."/>
            <person name="Morris S."/>
            <person name="Munidasa M."/>
            <person name="Ngo R.N."/>
            <person name="Nguyen N.B."/>
            <person name="Nickerson E."/>
            <person name="Nwaokelemeh O.O."/>
            <person name="Nwokenkwo S."/>
            <person name="Obregon M."/>
            <person name="Oguh M."/>
            <person name="Oragunye N."/>
            <person name="Oviedo R.J."/>
            <person name="Parish B.J."/>
            <person name="Parker D.N."/>
            <person name="Parrish J."/>
            <person name="Parks K.L."/>
            <person name="Paul H.A."/>
            <person name="Payton B.A."/>
            <person name="Perez A."/>
            <person name="Perrin W."/>
            <person name="Pickens A."/>
            <person name="Primus E.L."/>
            <person name="Pu L.-L."/>
            <person name="Puazo M."/>
            <person name="Quiles M.M."/>
            <person name="Quiroz J.B."/>
            <person name="Rabata D."/>
            <person name="Reeves K."/>
            <person name="Ruiz S.J."/>
            <person name="Shao H."/>
            <person name="Sisson I."/>
            <person name="Sonaike T."/>
            <person name="Sorelle R.P."/>
            <person name="Sutton A.E."/>
            <person name="Svatek A.F."/>
            <person name="Svetz L.A."/>
            <person name="Tamerisa K.S."/>
            <person name="Taylor T.R."/>
            <person name="Teague B."/>
            <person name="Thomas N."/>
            <person name="Thorn R.D."/>
            <person name="Trejos Z.Y."/>
            <person name="Trevino B.K."/>
            <person name="Ukegbu O.N."/>
            <person name="Urban J.B."/>
            <person name="Vasquez L.I."/>
            <person name="Vera V.A."/>
            <person name="Villasana D.M."/>
            <person name="Wang L."/>
            <person name="Ward-Moore S."/>
            <person name="Warren J.T."/>
            <person name="Wei X."/>
            <person name="White F."/>
            <person name="Williamson A.L."/>
            <person name="Wleczyk R."/>
            <person name="Wooden H.S."/>
            <person name="Wooden S.H."/>
            <person name="Yen J."/>
            <person name="Yoon L."/>
            <person name="Yoon V."/>
            <person name="Zorrilla S.E."/>
            <person name="Nelson D."/>
            <person name="Kucherlapati R."/>
            <person name="Weinstock G."/>
            <person name="Gibbs R.A."/>
        </authorList>
    </citation>
    <scope>NUCLEOTIDE SEQUENCE [LARGE SCALE GENOMIC DNA]</scope>
</reference>
<reference key="3">
    <citation type="journal article" date="2003" name="J. Biol. Chem.">
        <title>Identification of a novel human kinase supporter of Ras (hKSR-2) that functions as a negative regulator of Cot (Tpl2) signaling.</title>
        <authorList>
            <person name="Channavajhala P.L."/>
            <person name="Wu L."/>
            <person name="Cuozzo J.W."/>
            <person name="Hall J.P."/>
            <person name="Liu W."/>
            <person name="Lin L.-L."/>
            <person name="Zhang Y."/>
        </authorList>
    </citation>
    <scope>NUCLEOTIDE SEQUENCE [MRNA] OF 122-950 (ISOFORM 1)</scope>
    <scope>FUNCTION</scope>
    <scope>INTERACTION WITH MAP2K; RAS; RAF; MAPK AND MAP3K8</scope>
    <scope>TISSUE SPECIFICITY</scope>
    <source>
        <tissue>Testis</tissue>
    </source>
</reference>
<reference key="4">
    <citation type="journal article" date="2004" name="Genome Res.">
        <title>The status, quality, and expansion of the NIH full-length cDNA project: the Mammalian Gene Collection (MGC).</title>
        <authorList>
            <consortium name="The MGC Project Team"/>
        </authorList>
    </citation>
    <scope>NUCLEOTIDE SEQUENCE [LARGE SCALE MRNA] OF 122-950 (ISOFORM 1)</scope>
</reference>
<reference key="5">
    <citation type="journal article" date="2005" name="Biochem. Biophys. Res. Commun.">
        <title>hKSR-2 inhibits MEKK3-activated MAP kinase and NF-kappaB pathways in inflammation.</title>
        <authorList>
            <person name="Channavajhala P.L."/>
            <person name="Rao V.R."/>
            <person name="Spaulding V."/>
            <person name="Lin L.-L."/>
            <person name="Zhang Y.G."/>
        </authorList>
    </citation>
    <scope>FUNCTION</scope>
</reference>
<reference key="6">
    <citation type="journal article" date="2018" name="Nature">
        <title>MEK drives BRAF activation through allosteric control of KSR proteins.</title>
        <authorList>
            <person name="Lavoie H."/>
            <person name="Sahmi M."/>
            <person name="Maisonneuve P."/>
            <person name="Marullo S.A."/>
            <person name="Thevakumaran N."/>
            <person name="Jin T."/>
            <person name="Kurinov I."/>
            <person name="Sicheri F."/>
            <person name="Therrien M."/>
        </authorList>
    </citation>
    <scope>FUNCTION</scope>
    <scope>INTERACTION WITH BRAF; MAP2K1 AND MAP2K2</scope>
</reference>
<reference key="7">
    <citation type="journal article" date="2011" name="Nature">
        <title>A Raf-induced allosteric transition of KSR stimulates phosphorylation of MEK.</title>
        <authorList>
            <person name="Brennan D.F."/>
            <person name="Dar A.C."/>
            <person name="Hertz N.T."/>
            <person name="Chao W.C."/>
            <person name="Burlingame A.L."/>
            <person name="Shokat K.M."/>
            <person name="Barford D."/>
        </authorList>
    </citation>
    <scope>X-RAY CRYSTALLOGRAPHY (3.46 ANGSTROMS) OF 634-950 OF MUTANT ALA-786 IN COMPLEX WITH ATP AND MAP2K1</scope>
    <scope>FUNCTION</scope>
    <scope>CATALYTIC ACTIVITY</scope>
    <scope>ACTIVITY REGULATION</scope>
    <scope>SUBUNIT</scope>
    <scope>INTERACTION WITH BRAF AND MAP2K1</scope>
    <scope>ACTIVE SITE</scope>
    <scope>MUTAGENESIS OF ARG-718; ASP-786 AND ALA-879</scope>
</reference>
<reference key="8">
    <citation type="journal article" date="2007" name="Nature">
        <title>Patterns of somatic mutation in human cancer genomes.</title>
        <authorList>
            <person name="Greenman C."/>
            <person name="Stephens P."/>
            <person name="Smith R."/>
            <person name="Dalgliesh G.L."/>
            <person name="Hunter C."/>
            <person name="Bignell G."/>
            <person name="Davies H."/>
            <person name="Teague J."/>
            <person name="Butler A."/>
            <person name="Stevens C."/>
            <person name="Edkins S."/>
            <person name="O'Meara S."/>
            <person name="Vastrik I."/>
            <person name="Schmidt E.E."/>
            <person name="Avis T."/>
            <person name="Barthorpe S."/>
            <person name="Bhamra G."/>
            <person name="Buck G."/>
            <person name="Choudhury B."/>
            <person name="Clements J."/>
            <person name="Cole J."/>
            <person name="Dicks E."/>
            <person name="Forbes S."/>
            <person name="Gray K."/>
            <person name="Halliday K."/>
            <person name="Harrison R."/>
            <person name="Hills K."/>
            <person name="Hinton J."/>
            <person name="Jenkinson A."/>
            <person name="Jones D."/>
            <person name="Menzies A."/>
            <person name="Mironenko T."/>
            <person name="Perry J."/>
            <person name="Raine K."/>
            <person name="Richardson D."/>
            <person name="Shepherd R."/>
            <person name="Small A."/>
            <person name="Tofts C."/>
            <person name="Varian J."/>
            <person name="Webb T."/>
            <person name="West S."/>
            <person name="Widaa S."/>
            <person name="Yates A."/>
            <person name="Cahill D.P."/>
            <person name="Louis D.N."/>
            <person name="Goldstraw P."/>
            <person name="Nicholson A.G."/>
            <person name="Brasseur F."/>
            <person name="Looijenga L."/>
            <person name="Weber B.L."/>
            <person name="Chiew Y.-E."/>
            <person name="DeFazio A."/>
            <person name="Greaves M.F."/>
            <person name="Green A.R."/>
            <person name="Campbell P."/>
            <person name="Birney E."/>
            <person name="Easton D.F."/>
            <person name="Chenevix-Trench G."/>
            <person name="Tan M.-H."/>
            <person name="Khoo S.K."/>
            <person name="Teh B.T."/>
            <person name="Yuen S.T."/>
            <person name="Leung S.Y."/>
            <person name="Wooster R."/>
            <person name="Futreal P.A."/>
            <person name="Stratton M.R."/>
        </authorList>
    </citation>
    <scope>VARIANT [LARGE SCALE ANALYSIS] SER-676</scope>
</reference>
<organism>
    <name type="scientific">Homo sapiens</name>
    <name type="common">Human</name>
    <dbReference type="NCBI Taxonomy" id="9606"/>
    <lineage>
        <taxon>Eukaryota</taxon>
        <taxon>Metazoa</taxon>
        <taxon>Chordata</taxon>
        <taxon>Craniata</taxon>
        <taxon>Vertebrata</taxon>
        <taxon>Euteleostomi</taxon>
        <taxon>Mammalia</taxon>
        <taxon>Eutheria</taxon>
        <taxon>Euarchontoglires</taxon>
        <taxon>Primates</taxon>
        <taxon>Haplorrhini</taxon>
        <taxon>Catarrhini</taxon>
        <taxon>Hominidae</taxon>
        <taxon>Homo</taxon>
    </lineage>
</organism>
<gene>
    <name evidence="14" type="primary">KSR2</name>
</gene>
<evidence type="ECO:0000250" key="1"/>
<evidence type="ECO:0000250" key="2">
    <source>
        <dbReference type="UniProtKB" id="Q3UVC0"/>
    </source>
</evidence>
<evidence type="ECO:0000255" key="3">
    <source>
        <dbReference type="PROSITE-ProRule" id="PRU00159"/>
    </source>
</evidence>
<evidence type="ECO:0000255" key="4">
    <source>
        <dbReference type="PROSITE-ProRule" id="PRU00226"/>
    </source>
</evidence>
<evidence type="ECO:0000256" key="5">
    <source>
        <dbReference type="SAM" id="MobiDB-lite"/>
    </source>
</evidence>
<evidence type="ECO:0000269" key="6">
    <source>
    </source>
</evidence>
<evidence type="ECO:0000269" key="7">
    <source>
    </source>
</evidence>
<evidence type="ECO:0000269" key="8">
    <source>
    </source>
</evidence>
<evidence type="ECO:0000269" key="9">
    <source>
    </source>
</evidence>
<evidence type="ECO:0000269" key="10">
    <source>
    </source>
</evidence>
<evidence type="ECO:0000303" key="11">
    <source>
    </source>
</evidence>
<evidence type="ECO:0000305" key="12"/>
<evidence type="ECO:0000305" key="13">
    <source>
    </source>
</evidence>
<evidence type="ECO:0000312" key="14">
    <source>
        <dbReference type="HGNC" id="HGNC:18610"/>
    </source>
</evidence>
<evidence type="ECO:0007829" key="15">
    <source>
        <dbReference type="PDB" id="7JUQ"/>
    </source>
</evidence>
<evidence type="ECO:0007829" key="16">
    <source>
        <dbReference type="PDB" id="7JUR"/>
    </source>
</evidence>
<protein>
    <recommendedName>
        <fullName evidence="12">Kinase suppressor of Ras 2</fullName>
        <shortName>hKSR2</shortName>
        <ecNumber evidence="9">2.7.11.1</ecNumber>
    </recommendedName>
</protein>
<accession>Q6VAB6</accession>
<accession>A0PJT2</accession>
<accession>Q3B828</accession>
<accession>Q8N775</accession>
<proteinExistence type="evidence at protein level"/>
<keyword id="KW-0002">3D-structure</keyword>
<keyword id="KW-0025">Alternative splicing</keyword>
<keyword id="KW-0067">ATP-binding</keyword>
<keyword id="KW-0963">Cytoplasm</keyword>
<keyword id="KW-0418">Kinase</keyword>
<keyword id="KW-0472">Membrane</keyword>
<keyword id="KW-0479">Metal-binding</keyword>
<keyword id="KW-0547">Nucleotide-binding</keyword>
<keyword id="KW-0597">Phosphoprotein</keyword>
<keyword id="KW-1267">Proteomics identification</keyword>
<keyword id="KW-1185">Reference proteome</keyword>
<keyword id="KW-0723">Serine/threonine-protein kinase</keyword>
<keyword id="KW-0808">Transferase</keyword>
<keyword id="KW-0862">Zinc</keyword>
<keyword id="KW-0863">Zinc-finger</keyword>